<gene>
    <name evidence="1" type="primary">rpmC</name>
    <name type="ordered locus">SYO3AOP1_0283</name>
</gene>
<keyword id="KW-0687">Ribonucleoprotein</keyword>
<keyword id="KW-0689">Ribosomal protein</keyword>
<protein>
    <recommendedName>
        <fullName evidence="1">Large ribosomal subunit protein uL29</fullName>
    </recommendedName>
    <alternativeName>
        <fullName evidence="2">50S ribosomal protein L29</fullName>
    </alternativeName>
</protein>
<organism>
    <name type="scientific">Sulfurihydrogenibium sp. (strain YO3AOP1)</name>
    <dbReference type="NCBI Taxonomy" id="436114"/>
    <lineage>
        <taxon>Bacteria</taxon>
        <taxon>Pseudomonadati</taxon>
        <taxon>Aquificota</taxon>
        <taxon>Aquificia</taxon>
        <taxon>Aquificales</taxon>
        <taxon>Hydrogenothermaceae</taxon>
        <taxon>Sulfurihydrogenibium</taxon>
    </lineage>
</organism>
<name>RL29_SULSY</name>
<feature type="chain" id="PRO_1000121827" description="Large ribosomal subunit protein uL29">
    <location>
        <begin position="1"/>
        <end position="67"/>
    </location>
</feature>
<comment type="similarity">
    <text evidence="1">Belongs to the universal ribosomal protein uL29 family.</text>
</comment>
<sequence>MKASELRKLSNEELKEKILELKKKLFNLRFQNKIGSISNTAEINQTKKDIARILTILRERELNKTNG</sequence>
<reference key="1">
    <citation type="journal article" date="2009" name="J. Bacteriol.">
        <title>Complete and draft genome sequences of six members of the Aquificales.</title>
        <authorList>
            <person name="Reysenbach A.-L."/>
            <person name="Hamamura N."/>
            <person name="Podar M."/>
            <person name="Griffiths E."/>
            <person name="Ferreira S."/>
            <person name="Hochstein R."/>
            <person name="Heidelberg J."/>
            <person name="Johnson J."/>
            <person name="Mead D."/>
            <person name="Pohorille A."/>
            <person name="Sarmiento M."/>
            <person name="Schweighofer K."/>
            <person name="Seshadri R."/>
            <person name="Voytek M.A."/>
        </authorList>
    </citation>
    <scope>NUCLEOTIDE SEQUENCE [LARGE SCALE GENOMIC DNA]</scope>
    <source>
        <strain>YO3AOP1</strain>
    </source>
</reference>
<proteinExistence type="inferred from homology"/>
<accession>B2V7K5</accession>
<dbReference type="EMBL" id="CP001080">
    <property type="protein sequence ID" value="ACD65928.1"/>
    <property type="molecule type" value="Genomic_DNA"/>
</dbReference>
<dbReference type="RefSeq" id="WP_012459017.1">
    <property type="nucleotide sequence ID" value="NC_010730.1"/>
</dbReference>
<dbReference type="SMR" id="B2V7K5"/>
<dbReference type="STRING" id="436114.SYO3AOP1_0283"/>
<dbReference type="KEGG" id="sul:SYO3AOP1_0283"/>
<dbReference type="eggNOG" id="COG0255">
    <property type="taxonomic scope" value="Bacteria"/>
</dbReference>
<dbReference type="HOGENOM" id="CLU_158491_5_2_0"/>
<dbReference type="GO" id="GO:0022625">
    <property type="term" value="C:cytosolic large ribosomal subunit"/>
    <property type="evidence" value="ECO:0007669"/>
    <property type="project" value="TreeGrafter"/>
</dbReference>
<dbReference type="GO" id="GO:0003735">
    <property type="term" value="F:structural constituent of ribosome"/>
    <property type="evidence" value="ECO:0007669"/>
    <property type="project" value="InterPro"/>
</dbReference>
<dbReference type="GO" id="GO:0006412">
    <property type="term" value="P:translation"/>
    <property type="evidence" value="ECO:0007669"/>
    <property type="project" value="UniProtKB-UniRule"/>
</dbReference>
<dbReference type="CDD" id="cd00427">
    <property type="entry name" value="Ribosomal_L29_HIP"/>
    <property type="match status" value="1"/>
</dbReference>
<dbReference type="FunFam" id="1.10.287.310:FF:000001">
    <property type="entry name" value="50S ribosomal protein L29"/>
    <property type="match status" value="1"/>
</dbReference>
<dbReference type="Gene3D" id="1.10.287.310">
    <property type="match status" value="1"/>
</dbReference>
<dbReference type="HAMAP" id="MF_00374">
    <property type="entry name" value="Ribosomal_uL29"/>
    <property type="match status" value="1"/>
</dbReference>
<dbReference type="InterPro" id="IPR050063">
    <property type="entry name" value="Ribosomal_protein_uL29"/>
</dbReference>
<dbReference type="InterPro" id="IPR001854">
    <property type="entry name" value="Ribosomal_uL29"/>
</dbReference>
<dbReference type="InterPro" id="IPR018254">
    <property type="entry name" value="Ribosomal_uL29_CS"/>
</dbReference>
<dbReference type="InterPro" id="IPR036049">
    <property type="entry name" value="Ribosomal_uL29_sf"/>
</dbReference>
<dbReference type="NCBIfam" id="TIGR00012">
    <property type="entry name" value="L29"/>
    <property type="match status" value="1"/>
</dbReference>
<dbReference type="PANTHER" id="PTHR10916">
    <property type="entry name" value="60S RIBOSOMAL PROTEIN L35/50S RIBOSOMAL PROTEIN L29"/>
    <property type="match status" value="1"/>
</dbReference>
<dbReference type="PANTHER" id="PTHR10916:SF0">
    <property type="entry name" value="LARGE RIBOSOMAL SUBUNIT PROTEIN UL29C"/>
    <property type="match status" value="1"/>
</dbReference>
<dbReference type="Pfam" id="PF00831">
    <property type="entry name" value="Ribosomal_L29"/>
    <property type="match status" value="1"/>
</dbReference>
<dbReference type="SUPFAM" id="SSF46561">
    <property type="entry name" value="Ribosomal protein L29 (L29p)"/>
    <property type="match status" value="1"/>
</dbReference>
<dbReference type="PROSITE" id="PS00579">
    <property type="entry name" value="RIBOSOMAL_L29"/>
    <property type="match status" value="1"/>
</dbReference>
<evidence type="ECO:0000255" key="1">
    <source>
        <dbReference type="HAMAP-Rule" id="MF_00374"/>
    </source>
</evidence>
<evidence type="ECO:0000305" key="2"/>